<evidence type="ECO:0000255" key="1">
    <source>
        <dbReference type="HAMAP-Rule" id="MF_00432"/>
    </source>
</evidence>
<evidence type="ECO:0000269" key="2">
    <source>
    </source>
</evidence>
<evidence type="ECO:0000305" key="3">
    <source>
    </source>
</evidence>
<evidence type="ECO:0007829" key="4">
    <source>
        <dbReference type="PDB" id="4H0L"/>
    </source>
</evidence>
<evidence type="ECO:0007829" key="5">
    <source>
        <dbReference type="PDB" id="4I7Z"/>
    </source>
</evidence>
<protein>
    <recommendedName>
        <fullName evidence="1">Cytochrome b6-f complex subunit 5</fullName>
    </recommendedName>
    <alternativeName>
        <fullName evidence="1">Cytochrome b6-f complex subunit PetG</fullName>
    </alternativeName>
    <alternativeName>
        <fullName evidence="1">Cytochrome b6-f complex subunit V</fullName>
    </alternativeName>
</protein>
<reference key="1">
    <citation type="journal article" date="2003" name="Science">
        <title>Structure of the cytochrome b6f complex of oxygenic photosynthesis: tuning the cavity.</title>
        <authorList>
            <person name="Kurisu G."/>
            <person name="Zhang H."/>
            <person name="Smith J.L."/>
            <person name="Cramer W.A."/>
        </authorList>
    </citation>
    <scope>X-RAY CRYSTALLOGRAPHY (3.0 ANGSTROMS) IN CYTOCHROME B6-F COMPLEX</scope>
    <scope>FUNCTION</scope>
    <scope>SUBUNIT</scope>
    <scope>SUBCELLULAR LOCATION</scope>
</reference>
<gene>
    <name evidence="1" type="primary">petG</name>
</gene>
<proteinExistence type="evidence at protein level"/>
<accession>P83797</accession>
<organism>
    <name type="scientific">Mastigocladus laminosus</name>
    <name type="common">Fischerella sp.</name>
    <dbReference type="NCBI Taxonomy" id="83541"/>
    <lineage>
        <taxon>Bacteria</taxon>
        <taxon>Bacillati</taxon>
        <taxon>Cyanobacteriota</taxon>
        <taxon>Cyanophyceae</taxon>
        <taxon>Nostocales</taxon>
        <taxon>Hapalosiphonaceae</taxon>
        <taxon>Mastigocladus</taxon>
    </lineage>
</organism>
<comment type="function">
    <text evidence="3">Component of the cytochrome b6-f complex, which mediates electron transfer between photosystem II (PSII) and photosystem I (PSI), cyclic electron flow around PSI, and state transitions. PetG is required for either the stability or assembly of the cytochrome b6-f complex.</text>
</comment>
<comment type="subunit">
    <text evidence="2">The 4 large subunits of the cytochrome b6-f complex are cytochrome b6, subunit IV (17 kDa polypeptide, PetD), cytochrome f and the Rieske protein, while the 4 small subunits are PetG, PetL, PetM and PetN. The complex functions as a dimer.</text>
</comment>
<comment type="subcellular location">
    <subcellularLocation>
        <location evidence="3">Cellular thylakoid membrane</location>
        <topology evidence="2">Single-pass membrane protein</topology>
    </subcellularLocation>
</comment>
<comment type="similarity">
    <text evidence="1">Belongs to the PetG family.</text>
</comment>
<keyword id="KW-0002">3D-structure</keyword>
<keyword id="KW-0249">Electron transport</keyword>
<keyword id="KW-0472">Membrane</keyword>
<keyword id="KW-0602">Photosynthesis</keyword>
<keyword id="KW-0793">Thylakoid</keyword>
<keyword id="KW-0812">Transmembrane</keyword>
<keyword id="KW-1133">Transmembrane helix</keyword>
<keyword id="KW-0813">Transport</keyword>
<name>PETG_MASLA</name>
<dbReference type="PDB" id="1VF5">
    <property type="method" value="X-ray"/>
    <property type="resolution" value="3.00 A"/>
    <property type="chains" value="G/T=1-37"/>
</dbReference>
<dbReference type="PDB" id="2D2C">
    <property type="method" value="X-ray"/>
    <property type="resolution" value="3.80 A"/>
    <property type="chains" value="G/T=1-37"/>
</dbReference>
<dbReference type="PDB" id="2E74">
    <property type="method" value="X-ray"/>
    <property type="resolution" value="3.00 A"/>
    <property type="chains" value="G=1-37"/>
</dbReference>
<dbReference type="PDB" id="2E75">
    <property type="method" value="X-ray"/>
    <property type="resolution" value="3.55 A"/>
    <property type="chains" value="G=1-37"/>
</dbReference>
<dbReference type="PDB" id="2E76">
    <property type="method" value="X-ray"/>
    <property type="resolution" value="3.41 A"/>
    <property type="chains" value="G=1-37"/>
</dbReference>
<dbReference type="PDB" id="4H0L">
    <property type="method" value="X-ray"/>
    <property type="resolution" value="3.25 A"/>
    <property type="chains" value="G=1-37"/>
</dbReference>
<dbReference type="PDB" id="4H13">
    <property type="method" value="X-ray"/>
    <property type="resolution" value="3.07 A"/>
    <property type="chains" value="G=1-37"/>
</dbReference>
<dbReference type="PDB" id="4I7Z">
    <property type="method" value="X-ray"/>
    <property type="resolution" value="2.80 A"/>
    <property type="chains" value="G=1-37"/>
</dbReference>
<dbReference type="PDB" id="4PV1">
    <property type="method" value="X-ray"/>
    <property type="resolution" value="3.00 A"/>
    <property type="chains" value="G=1-37"/>
</dbReference>
<dbReference type="PDBsum" id="1VF5"/>
<dbReference type="PDBsum" id="2D2C"/>
<dbReference type="PDBsum" id="2E74"/>
<dbReference type="PDBsum" id="2E75"/>
<dbReference type="PDBsum" id="2E76"/>
<dbReference type="PDBsum" id="4H0L"/>
<dbReference type="PDBsum" id="4H13"/>
<dbReference type="PDBsum" id="4I7Z"/>
<dbReference type="PDBsum" id="4PV1"/>
<dbReference type="SMR" id="P83797"/>
<dbReference type="DrugBank" id="DB08453">
    <property type="generic name" value="2-Nonyl-4-quinolinol 1-oxide"/>
</dbReference>
<dbReference type="DrugBank" id="DB04646">
    <property type="generic name" value="Dibromothymoquinone"/>
</dbReference>
<dbReference type="EvolutionaryTrace" id="P83797"/>
<dbReference type="GO" id="GO:0009512">
    <property type="term" value="C:cytochrome b6f complex"/>
    <property type="evidence" value="ECO:0007669"/>
    <property type="project" value="InterPro"/>
</dbReference>
<dbReference type="GO" id="GO:0031676">
    <property type="term" value="C:plasma membrane-derived thylakoid membrane"/>
    <property type="evidence" value="ECO:0007669"/>
    <property type="project" value="UniProtKB-SubCell"/>
</dbReference>
<dbReference type="GO" id="GO:0045158">
    <property type="term" value="F:electron transporter, transferring electrons within cytochrome b6/f complex of photosystem II activity"/>
    <property type="evidence" value="ECO:0007669"/>
    <property type="project" value="UniProtKB-UniRule"/>
</dbReference>
<dbReference type="GO" id="GO:0017004">
    <property type="term" value="P:cytochrome complex assembly"/>
    <property type="evidence" value="ECO:0007669"/>
    <property type="project" value="UniProtKB-UniRule"/>
</dbReference>
<dbReference type="GO" id="GO:0015979">
    <property type="term" value="P:photosynthesis"/>
    <property type="evidence" value="ECO:0007669"/>
    <property type="project" value="UniProtKB-KW"/>
</dbReference>
<dbReference type="HAMAP" id="MF_00432">
    <property type="entry name" value="Cytb6_f_PetG"/>
    <property type="match status" value="1"/>
</dbReference>
<dbReference type="InterPro" id="IPR003683">
    <property type="entry name" value="Cyt_6/f_cplx_su5"/>
</dbReference>
<dbReference type="InterPro" id="IPR036099">
    <property type="entry name" value="Cyt_6/f_cplx_su5_sf"/>
</dbReference>
<dbReference type="NCBIfam" id="NF001907">
    <property type="entry name" value="PRK00665.1"/>
    <property type="match status" value="1"/>
</dbReference>
<dbReference type="Pfam" id="PF02529">
    <property type="entry name" value="PetG"/>
    <property type="match status" value="1"/>
</dbReference>
<dbReference type="PIRSF" id="PIRSF000034">
    <property type="entry name" value="Cyt_b6-f_V"/>
    <property type="match status" value="1"/>
</dbReference>
<dbReference type="SUPFAM" id="SSF103446">
    <property type="entry name" value="PetG subunit of the cytochrome b6f complex"/>
    <property type="match status" value="1"/>
</dbReference>
<feature type="chain" id="PRO_0000216411" description="Cytochrome b6-f complex subunit 5">
    <location>
        <begin position="1"/>
        <end position="37"/>
    </location>
</feature>
<feature type="transmembrane region" description="Helical" evidence="1 3">
    <location>
        <begin position="5"/>
        <end position="25"/>
    </location>
</feature>
<feature type="helix" evidence="5">
    <location>
        <begin position="4"/>
        <end position="30"/>
    </location>
</feature>
<feature type="turn" evidence="4">
    <location>
        <begin position="34"/>
        <end position="36"/>
    </location>
</feature>
<sequence length="37" mass="4015">MVEPLLDGLVLGLVFATLGGLFYAAYQQYKRPNELGG</sequence>